<reference key="1">
    <citation type="journal article" date="1998" name="Nature">
        <title>The genome sequence of Rickettsia prowazekii and the origin of mitochondria.</title>
        <authorList>
            <person name="Andersson S.G.E."/>
            <person name="Zomorodipour A."/>
            <person name="Andersson J.O."/>
            <person name="Sicheritz-Ponten T."/>
            <person name="Alsmark U.C.M."/>
            <person name="Podowski R.M."/>
            <person name="Naeslund A.K."/>
            <person name="Eriksson A.-S."/>
            <person name="Winkler H.H."/>
            <person name="Kurland C.G."/>
        </authorList>
    </citation>
    <scope>NUCLEOTIDE SEQUENCE [LARGE SCALE GENOMIC DNA]</scope>
    <source>
        <strain>Madrid E</strain>
    </source>
</reference>
<keyword id="KW-0235">DNA replication</keyword>
<keyword id="KW-0239">DNA-directed DNA polymerase</keyword>
<keyword id="KW-0548">Nucleotidyltransferase</keyword>
<keyword id="KW-1185">Reference proteome</keyword>
<keyword id="KW-0808">Transferase</keyword>
<organism>
    <name type="scientific">Rickettsia prowazekii (strain Madrid E)</name>
    <dbReference type="NCBI Taxonomy" id="272947"/>
    <lineage>
        <taxon>Bacteria</taxon>
        <taxon>Pseudomonadati</taxon>
        <taxon>Pseudomonadota</taxon>
        <taxon>Alphaproteobacteria</taxon>
        <taxon>Rickettsiales</taxon>
        <taxon>Rickettsiaceae</taxon>
        <taxon>Rickettsieae</taxon>
        <taxon>Rickettsia</taxon>
        <taxon>typhus group</taxon>
    </lineage>
</organism>
<gene>
    <name evidence="1" type="primary">holc</name>
    <name type="ordered locus">RP872</name>
</gene>
<evidence type="ECO:0000250" key="1">
    <source>
        <dbReference type="UniProtKB" id="P28905"/>
    </source>
</evidence>
<evidence type="ECO:0000305" key="2"/>
<accession>Q9ZC94</accession>
<dbReference type="EC" id="2.7.7.7"/>
<dbReference type="EMBL" id="AJ235273">
    <property type="protein sequence ID" value="CAA15296.1"/>
    <property type="molecule type" value="Genomic_DNA"/>
</dbReference>
<dbReference type="PIR" id="H71649">
    <property type="entry name" value="H71649"/>
</dbReference>
<dbReference type="RefSeq" id="NP_221220.2">
    <property type="nucleotide sequence ID" value="NC_000963.1"/>
</dbReference>
<dbReference type="SMR" id="Q9ZC94"/>
<dbReference type="STRING" id="272947.gene:17555941"/>
<dbReference type="EnsemblBacteria" id="CAA15296">
    <property type="protein sequence ID" value="CAA15296"/>
    <property type="gene ID" value="CAA15296"/>
</dbReference>
<dbReference type="KEGG" id="rpr:RP872"/>
<dbReference type="eggNOG" id="COG2927">
    <property type="taxonomic scope" value="Bacteria"/>
</dbReference>
<dbReference type="HOGENOM" id="CLU_1814352_0_0_5"/>
<dbReference type="OrthoDB" id="9795973at2"/>
<dbReference type="Proteomes" id="UP000002480">
    <property type="component" value="Chromosome"/>
</dbReference>
<dbReference type="GO" id="GO:0003677">
    <property type="term" value="F:DNA binding"/>
    <property type="evidence" value="ECO:0007669"/>
    <property type="project" value="InterPro"/>
</dbReference>
<dbReference type="GO" id="GO:0003887">
    <property type="term" value="F:DNA-directed DNA polymerase activity"/>
    <property type="evidence" value="ECO:0007669"/>
    <property type="project" value="UniProtKB-KW"/>
</dbReference>
<dbReference type="GO" id="GO:0006260">
    <property type="term" value="P:DNA replication"/>
    <property type="evidence" value="ECO:0007669"/>
    <property type="project" value="UniProtKB-KW"/>
</dbReference>
<dbReference type="Gene3D" id="3.40.50.10110">
    <property type="entry name" value="DNA polymerase III subunit chi"/>
    <property type="match status" value="1"/>
</dbReference>
<dbReference type="InterPro" id="IPR007459">
    <property type="entry name" value="DNA_pol3_chi"/>
</dbReference>
<dbReference type="InterPro" id="IPR036768">
    <property type="entry name" value="PolIII_chi_sf"/>
</dbReference>
<dbReference type="NCBIfam" id="NF005172">
    <property type="entry name" value="PRK06646.1"/>
    <property type="match status" value="1"/>
</dbReference>
<dbReference type="Pfam" id="PF04364">
    <property type="entry name" value="DNA_pol3_chi"/>
    <property type="match status" value="1"/>
</dbReference>
<dbReference type="SUPFAM" id="SSF102400">
    <property type="entry name" value="DNA polymerase III chi subunit"/>
    <property type="match status" value="1"/>
</dbReference>
<proteinExistence type="inferred from homology"/>
<sequence>MKFLIEDNIKFMQQFSIYHTSNELFLKAILRLIEKCYYSNFKSVILTTDVHQQEMLNKNLWTYSRKQFIPHGSKFDPQPAKQPIYITDELQNPNNASVLVIISPTDIAKILQVKEYIKVFKRIIIITDLLENLKELIIKINKFTGQENKIDCFTQNPIGTWNKIA</sequence>
<name>HOLC_RICPR</name>
<comment type="function">
    <text evidence="1">Part of the beta sliding clamp loading complex, which hydrolyzes ATP to load the beta clamp onto primed DNA to form the DNA replication pre-initiation complex. DNA polymerase III is a complex, multichain enzyme responsible for most of the replicative synthesis in bacteria. This DNA polymerase also exhibits 3' to 5' exonuclease activity (By similarity).</text>
</comment>
<comment type="catalytic activity">
    <reaction>
        <text>DNA(n) + a 2'-deoxyribonucleoside 5'-triphosphate = DNA(n+1) + diphosphate</text>
        <dbReference type="Rhea" id="RHEA:22508"/>
        <dbReference type="Rhea" id="RHEA-COMP:17339"/>
        <dbReference type="Rhea" id="RHEA-COMP:17340"/>
        <dbReference type="ChEBI" id="CHEBI:33019"/>
        <dbReference type="ChEBI" id="CHEBI:61560"/>
        <dbReference type="ChEBI" id="CHEBI:173112"/>
        <dbReference type="EC" id="2.7.7.7"/>
    </reaction>
</comment>
<comment type="subunit">
    <text evidence="1">DNA polymerase III contains a core (composed of alpha, epsilon and theta chains) that associates with a tau subunit. This core dimerizes to form the POLIII' complex. PolIII' associates with the gamma complex (composed of gamma, delta, delta', psi and chi chains) and with the beta chain to form the complete DNA polymerase III complex. Interacts directly with the psi subunit (holD). The only subunit of the DNA polymerase III holoenzyme known to interact with single-stranded DNA binding protein (SSB) (By similarity).</text>
</comment>
<comment type="similarity">
    <text evidence="2">Belongs to the DNA polymerase III chi/HolC chain family.</text>
</comment>
<feature type="chain" id="PRO_0000101428" description="Probable DNA polymerase III subunit chi">
    <location>
        <begin position="1"/>
        <end position="165"/>
    </location>
</feature>
<protein>
    <recommendedName>
        <fullName evidence="1">Probable DNA polymerase III subunit chi</fullName>
        <ecNumber>2.7.7.7</ecNumber>
    </recommendedName>
    <alternativeName>
        <fullName evidence="2">Accessory clamp loader complex subunit chi</fullName>
    </alternativeName>
    <alternativeName>
        <fullName evidence="2">Replication clamp loader subunit HolC</fullName>
    </alternativeName>
</protein>